<keyword id="KW-0002">3D-structure</keyword>
<keyword id="KW-0903">Direct protein sequencing</keyword>
<keyword id="KW-0326">Glycosidase</keyword>
<keyword id="KW-0378">Hydrolase</keyword>
<keyword id="KW-1185">Reference proteome</keyword>
<comment type="catalytic activity">
    <reaction>
        <text>Hydrolysis of (1-&gt;6)-alpha-D-glucosidic linkages in pullulan, amylopectin and glycogen, and in the alpha- and beta-limit dextrins of amylopectin and glycogen.</text>
        <dbReference type="EC" id="3.2.1.41"/>
    </reaction>
</comment>
<comment type="biophysicochemical properties">
    <kinetics>
        <Vmax evidence="2">27.6 umol/min/mg enzyme (at pH 5.4)</Vmax>
    </kinetics>
    <phDependence>
        <text evidence="2">Optimum pH is 6.0.</text>
    </phDependence>
    <temperatureDependence>
        <text evidence="2">Optimum temperature is 40 degrees Celsius.</text>
    </temperatureDependence>
</comment>
<comment type="similarity">
    <text evidence="3">Belongs to the glycosyl hydrolase 13 family.</text>
</comment>
<gene>
    <name type="primary">amyX</name>
    <name type="ordered locus">BSU29930</name>
</gene>
<feature type="chain" id="PRO_0000381992" description="Pullulanase">
    <location>
        <begin position="1"/>
        <end position="718"/>
    </location>
</feature>
<feature type="active site" description="Nucleophile" evidence="1">
    <location>
        <position position="406"/>
    </location>
</feature>
<feature type="active site" description="Proton donor" evidence="1">
    <location>
        <position position="435"/>
    </location>
</feature>
<feature type="site" description="Transition state stabilizer" evidence="1">
    <location>
        <position position="525"/>
    </location>
</feature>
<feature type="sequence conflict" description="In Ref. 1; AAC00283." evidence="3" ref="1">
    <original>A</original>
    <variation>V</variation>
    <location>
        <position position="553"/>
    </location>
</feature>
<feature type="strand" evidence="4">
    <location>
        <begin position="7"/>
        <end position="14"/>
    </location>
</feature>
<feature type="strand" evidence="4">
    <location>
        <begin position="17"/>
        <end position="23"/>
    </location>
</feature>
<feature type="helix" evidence="4">
    <location>
        <begin position="24"/>
        <end position="26"/>
    </location>
</feature>
<feature type="turn" evidence="4">
    <location>
        <begin position="27"/>
        <end position="29"/>
    </location>
</feature>
<feature type="strand" evidence="4">
    <location>
        <begin position="34"/>
        <end position="38"/>
    </location>
</feature>
<feature type="strand" evidence="4">
    <location>
        <begin position="41"/>
        <end position="52"/>
    </location>
</feature>
<feature type="strand" evidence="4">
    <location>
        <begin position="54"/>
        <end position="62"/>
    </location>
</feature>
<feature type="strand" evidence="4">
    <location>
        <begin position="74"/>
        <end position="76"/>
    </location>
</feature>
<feature type="strand" evidence="4">
    <location>
        <begin position="82"/>
        <end position="84"/>
    </location>
</feature>
<feature type="helix" evidence="4">
    <location>
        <begin position="89"/>
        <end position="92"/>
    </location>
</feature>
<feature type="helix" evidence="4">
    <location>
        <begin position="94"/>
        <end position="100"/>
    </location>
</feature>
<feature type="strand" evidence="4">
    <location>
        <begin position="107"/>
        <end position="110"/>
    </location>
</feature>
<feature type="strand" evidence="4">
    <location>
        <begin position="112"/>
        <end position="120"/>
    </location>
</feature>
<feature type="strand" evidence="4">
    <location>
        <begin position="125"/>
        <end position="132"/>
    </location>
</feature>
<feature type="strand" evidence="4">
    <location>
        <begin position="139"/>
        <end position="142"/>
    </location>
</feature>
<feature type="helix" evidence="4">
    <location>
        <begin position="147"/>
        <end position="149"/>
    </location>
</feature>
<feature type="strand" evidence="4">
    <location>
        <begin position="150"/>
        <end position="157"/>
    </location>
</feature>
<feature type="strand" evidence="4">
    <location>
        <begin position="163"/>
        <end position="170"/>
    </location>
</feature>
<feature type="strand" evidence="4">
    <location>
        <begin position="173"/>
        <end position="177"/>
    </location>
</feature>
<feature type="strand" evidence="4">
    <location>
        <begin position="183"/>
        <end position="185"/>
    </location>
</feature>
<feature type="helix" evidence="4">
    <location>
        <begin position="187"/>
        <end position="189"/>
    </location>
</feature>
<feature type="strand" evidence="4">
    <location>
        <begin position="191"/>
        <end position="193"/>
    </location>
</feature>
<feature type="helix" evidence="4">
    <location>
        <begin position="212"/>
        <end position="214"/>
    </location>
</feature>
<feature type="strand" evidence="4">
    <location>
        <begin position="217"/>
        <end position="220"/>
    </location>
</feature>
<feature type="helix" evidence="4">
    <location>
        <begin position="222"/>
        <end position="227"/>
    </location>
</feature>
<feature type="helix" evidence="4">
    <location>
        <begin position="239"/>
        <end position="243"/>
    </location>
</feature>
<feature type="helix" evidence="4">
    <location>
        <begin position="256"/>
        <end position="263"/>
    </location>
</feature>
<feature type="strand" evidence="4">
    <location>
        <begin position="266"/>
        <end position="271"/>
    </location>
</feature>
<feature type="strand" evidence="4">
    <location>
        <begin position="274"/>
        <end position="279"/>
    </location>
</feature>
<feature type="helix" evidence="4">
    <location>
        <begin position="284"/>
        <end position="286"/>
    </location>
</feature>
<feature type="strand" evidence="4">
    <location>
        <begin position="293"/>
        <end position="300"/>
    </location>
</feature>
<feature type="strand" evidence="4">
    <location>
        <begin position="308"/>
        <end position="310"/>
    </location>
</feature>
<feature type="helix" evidence="4">
    <location>
        <begin position="311"/>
        <end position="327"/>
    </location>
</feature>
<feature type="strand" evidence="4">
    <location>
        <begin position="331"/>
        <end position="336"/>
    </location>
</feature>
<feature type="helix" evidence="4">
    <location>
        <begin position="344"/>
        <end position="346"/>
    </location>
</feature>
<feature type="helix" evidence="4">
    <location>
        <begin position="348"/>
        <end position="352"/>
    </location>
</feature>
<feature type="turn" evidence="4">
    <location>
        <begin position="354"/>
        <end position="356"/>
    </location>
</feature>
<feature type="strand" evidence="4">
    <location>
        <begin position="364"/>
        <end position="366"/>
    </location>
</feature>
<feature type="strand" evidence="4">
    <location>
        <begin position="371"/>
        <end position="373"/>
    </location>
</feature>
<feature type="helix" evidence="4">
    <location>
        <begin position="381"/>
        <end position="398"/>
    </location>
</feature>
<feature type="strand" evidence="4">
    <location>
        <begin position="402"/>
        <end position="405"/>
    </location>
</feature>
<feature type="helix" evidence="4">
    <location>
        <begin position="408"/>
        <end position="410"/>
    </location>
</feature>
<feature type="helix" evidence="4">
    <location>
        <begin position="413"/>
        <end position="426"/>
    </location>
</feature>
<feature type="strand" evidence="4">
    <location>
        <begin position="431"/>
        <end position="434"/>
    </location>
</feature>
<feature type="helix" evidence="4">
    <location>
        <begin position="445"/>
        <end position="447"/>
    </location>
</feature>
<feature type="helix" evidence="4">
    <location>
        <begin position="451"/>
        <end position="456"/>
    </location>
</feature>
<feature type="strand" evidence="4">
    <location>
        <begin position="461"/>
        <end position="463"/>
    </location>
</feature>
<feature type="helix" evidence="4">
    <location>
        <begin position="465"/>
        <end position="472"/>
    </location>
</feature>
<feature type="strand" evidence="4">
    <location>
        <begin position="475"/>
        <end position="477"/>
    </location>
</feature>
<feature type="helix" evidence="4">
    <location>
        <begin position="483"/>
        <end position="485"/>
    </location>
</feature>
<feature type="helix" evidence="4">
    <location>
        <begin position="488"/>
        <end position="490"/>
    </location>
</feature>
<feature type="helix" evidence="4">
    <location>
        <begin position="491"/>
        <end position="498"/>
    </location>
</feature>
<feature type="strand" evidence="4">
    <location>
        <begin position="510"/>
        <end position="513"/>
    </location>
</feature>
<feature type="helix" evidence="4">
    <location>
        <begin position="514"/>
        <end position="516"/>
    </location>
</feature>
<feature type="strand" evidence="4">
    <location>
        <begin position="517"/>
        <end position="519"/>
    </location>
</feature>
<feature type="strand" evidence="4">
    <location>
        <begin position="524"/>
        <end position="527"/>
    </location>
</feature>
<feature type="helix" evidence="4">
    <location>
        <begin position="529"/>
        <end position="536"/>
    </location>
</feature>
<feature type="helix" evidence="4">
    <location>
        <begin position="542"/>
        <end position="557"/>
    </location>
</feature>
<feature type="strand" evidence="4">
    <location>
        <begin position="559"/>
        <end position="566"/>
    </location>
</feature>
<feature type="helix" evidence="4">
    <location>
        <begin position="569"/>
        <end position="571"/>
    </location>
</feature>
<feature type="helix" evidence="4">
    <location>
        <begin position="586"/>
        <end position="589"/>
    </location>
</feature>
<feature type="helix" evidence="4">
    <location>
        <begin position="593"/>
        <end position="598"/>
    </location>
</feature>
<feature type="helix" evidence="4">
    <location>
        <begin position="600"/>
        <end position="615"/>
    </location>
</feature>
<feature type="helix" evidence="4">
    <location>
        <begin position="617"/>
        <end position="620"/>
    </location>
</feature>
<feature type="helix" evidence="4">
    <location>
        <begin position="624"/>
        <end position="630"/>
    </location>
</feature>
<feature type="strand" evidence="4">
    <location>
        <begin position="631"/>
        <end position="636"/>
    </location>
</feature>
<feature type="strand" evidence="4">
    <location>
        <begin position="638"/>
        <end position="645"/>
    </location>
</feature>
<feature type="turn" evidence="4">
    <location>
        <begin position="649"/>
        <end position="651"/>
    </location>
</feature>
<feature type="strand" evidence="4">
    <location>
        <begin position="653"/>
        <end position="662"/>
    </location>
</feature>
<feature type="strand" evidence="4">
    <location>
        <begin position="664"/>
        <end position="671"/>
    </location>
</feature>
<feature type="strand" evidence="5">
    <location>
        <begin position="673"/>
        <end position="676"/>
    </location>
</feature>
<feature type="strand" evidence="4">
    <location>
        <begin position="678"/>
        <end position="683"/>
    </location>
</feature>
<feature type="strand" evidence="4">
    <location>
        <begin position="686"/>
        <end position="694"/>
    </location>
</feature>
<feature type="strand" evidence="4">
    <location>
        <begin position="696"/>
        <end position="710"/>
    </location>
</feature>
<organism>
    <name type="scientific">Bacillus subtilis (strain 168)</name>
    <dbReference type="NCBI Taxonomy" id="224308"/>
    <lineage>
        <taxon>Bacteria</taxon>
        <taxon>Bacillati</taxon>
        <taxon>Bacillota</taxon>
        <taxon>Bacilli</taxon>
        <taxon>Bacillales</taxon>
        <taxon>Bacillaceae</taxon>
        <taxon>Bacillus</taxon>
    </lineage>
</organism>
<protein>
    <recommendedName>
        <fullName>Pullulanase</fullName>
        <ecNumber>3.2.1.41</ecNumber>
    </recommendedName>
    <alternativeName>
        <fullName>Alpha-dextrin endo-1,6-alpha-glucosidase</fullName>
    </alternativeName>
    <alternativeName>
        <fullName>Pullulan 6-glucanohydrolase</fullName>
    </alternativeName>
</protein>
<dbReference type="EC" id="3.2.1.41"/>
<dbReference type="EMBL" id="AF008220">
    <property type="protein sequence ID" value="AAC00283.1"/>
    <property type="molecule type" value="Genomic_DNA"/>
</dbReference>
<dbReference type="EMBL" id="AL009126">
    <property type="protein sequence ID" value="CAB14971.2"/>
    <property type="molecule type" value="Genomic_DNA"/>
</dbReference>
<dbReference type="PIR" id="G69585">
    <property type="entry name" value="G69585"/>
</dbReference>
<dbReference type="RefSeq" id="NP_390871.2">
    <property type="nucleotide sequence ID" value="NC_000964.3"/>
</dbReference>
<dbReference type="PDB" id="2E8Y">
    <property type="method" value="X-ray"/>
    <property type="resolution" value="2.11 A"/>
    <property type="chains" value="A/B=1-718"/>
</dbReference>
<dbReference type="PDB" id="2E8Z">
    <property type="method" value="X-ray"/>
    <property type="resolution" value="2.20 A"/>
    <property type="chains" value="A/B=1-718"/>
</dbReference>
<dbReference type="PDB" id="2E9B">
    <property type="method" value="X-ray"/>
    <property type="resolution" value="2.30 A"/>
    <property type="chains" value="A/B=1-718"/>
</dbReference>
<dbReference type="PDBsum" id="2E8Y"/>
<dbReference type="PDBsum" id="2E8Z"/>
<dbReference type="PDBsum" id="2E9B"/>
<dbReference type="SMR" id="C0SPA0"/>
<dbReference type="FunCoup" id="C0SPA0">
    <property type="interactions" value="221"/>
</dbReference>
<dbReference type="STRING" id="224308.BSU29930"/>
<dbReference type="CAZy" id="CBM48">
    <property type="family name" value="Carbohydrate-Binding Module Family 48"/>
</dbReference>
<dbReference type="CAZy" id="CBM68">
    <property type="family name" value="Carbohydrate-Binding Module Family 68"/>
</dbReference>
<dbReference type="CAZy" id="GH13">
    <property type="family name" value="Glycoside Hydrolase Family 13"/>
</dbReference>
<dbReference type="PaxDb" id="224308-BSU29930"/>
<dbReference type="EnsemblBacteria" id="CAB14971">
    <property type="protein sequence ID" value="CAB14971"/>
    <property type="gene ID" value="BSU_29930"/>
</dbReference>
<dbReference type="GeneID" id="937292"/>
<dbReference type="KEGG" id="bsu:BSU29930"/>
<dbReference type="PATRIC" id="fig|224308.179.peg.3251"/>
<dbReference type="eggNOG" id="COG1523">
    <property type="taxonomic scope" value="Bacteria"/>
</dbReference>
<dbReference type="InParanoid" id="C0SPA0"/>
<dbReference type="OrthoDB" id="9761875at2"/>
<dbReference type="PhylomeDB" id="C0SPA0"/>
<dbReference type="BioCyc" id="BSUB:BSU29930-MONOMER"/>
<dbReference type="EvolutionaryTrace" id="C0SPA0"/>
<dbReference type="Proteomes" id="UP000001570">
    <property type="component" value="Chromosome"/>
</dbReference>
<dbReference type="GO" id="GO:0051060">
    <property type="term" value="F:pullulanase activity"/>
    <property type="evidence" value="ECO:0007669"/>
    <property type="project" value="UniProtKB-EC"/>
</dbReference>
<dbReference type="GO" id="GO:0005975">
    <property type="term" value="P:carbohydrate metabolic process"/>
    <property type="evidence" value="ECO:0007669"/>
    <property type="project" value="InterPro"/>
</dbReference>
<dbReference type="CDD" id="cd11341">
    <property type="entry name" value="AmyAc_Pullulanase_LD-like"/>
    <property type="match status" value="1"/>
</dbReference>
<dbReference type="CDD" id="cd02860">
    <property type="entry name" value="E_set_Pullulanase"/>
    <property type="match status" value="1"/>
</dbReference>
<dbReference type="Gene3D" id="2.60.40.2320">
    <property type="match status" value="1"/>
</dbReference>
<dbReference type="Gene3D" id="3.20.20.80">
    <property type="entry name" value="Glycosidases"/>
    <property type="match status" value="1"/>
</dbReference>
<dbReference type="Gene3D" id="2.60.40.1180">
    <property type="entry name" value="Golgi alpha-mannosidase II"/>
    <property type="match status" value="1"/>
</dbReference>
<dbReference type="Gene3D" id="2.60.40.10">
    <property type="entry name" value="Immunoglobulins"/>
    <property type="match status" value="1"/>
</dbReference>
<dbReference type="InterPro" id="IPR006047">
    <property type="entry name" value="Glyco_hydro_13_cat_dom"/>
</dbReference>
<dbReference type="InterPro" id="IPR004193">
    <property type="entry name" value="Glyco_hydro_13_N"/>
</dbReference>
<dbReference type="InterPro" id="IPR013780">
    <property type="entry name" value="Glyco_hydro_b"/>
</dbReference>
<dbReference type="InterPro" id="IPR017853">
    <property type="entry name" value="Glycoside_hydrolase_SF"/>
</dbReference>
<dbReference type="InterPro" id="IPR013783">
    <property type="entry name" value="Ig-like_fold"/>
</dbReference>
<dbReference type="InterPro" id="IPR014756">
    <property type="entry name" value="Ig_E-set"/>
</dbReference>
<dbReference type="InterPro" id="IPR049117">
    <property type="entry name" value="pulA_all-beta"/>
</dbReference>
<dbReference type="InterPro" id="IPR040697">
    <property type="entry name" value="PulA_N1"/>
</dbReference>
<dbReference type="InterPro" id="IPR011840">
    <property type="entry name" value="PulA_typeI"/>
</dbReference>
<dbReference type="NCBIfam" id="TIGR02104">
    <property type="entry name" value="pulA_typeI"/>
    <property type="match status" value="1"/>
</dbReference>
<dbReference type="PANTHER" id="PTHR43002">
    <property type="entry name" value="GLYCOGEN DEBRANCHING ENZYME"/>
    <property type="match status" value="1"/>
</dbReference>
<dbReference type="Pfam" id="PF00128">
    <property type="entry name" value="Alpha-amylase"/>
    <property type="match status" value="2"/>
</dbReference>
<dbReference type="Pfam" id="PF02922">
    <property type="entry name" value="CBM_48"/>
    <property type="match status" value="1"/>
</dbReference>
<dbReference type="Pfam" id="PF21653">
    <property type="entry name" value="pulA_all-beta"/>
    <property type="match status" value="1"/>
</dbReference>
<dbReference type="Pfam" id="PF17999">
    <property type="entry name" value="PulA_N1"/>
    <property type="match status" value="1"/>
</dbReference>
<dbReference type="SMART" id="SM00642">
    <property type="entry name" value="Aamy"/>
    <property type="match status" value="1"/>
</dbReference>
<dbReference type="SUPFAM" id="SSF51445">
    <property type="entry name" value="(Trans)glycosidases"/>
    <property type="match status" value="1"/>
</dbReference>
<dbReference type="SUPFAM" id="SSF81296">
    <property type="entry name" value="E set domains"/>
    <property type="match status" value="1"/>
</dbReference>
<evidence type="ECO:0000250" key="1"/>
<evidence type="ECO:0000269" key="2">
    <source>
    </source>
</evidence>
<evidence type="ECO:0000305" key="3"/>
<evidence type="ECO:0007829" key="4">
    <source>
        <dbReference type="PDB" id="2E8Y"/>
    </source>
</evidence>
<evidence type="ECO:0007829" key="5">
    <source>
        <dbReference type="PDB" id="2E9B"/>
    </source>
</evidence>
<reference key="1">
    <citation type="journal article" date="1997" name="Microbiology">
        <title>Sequencing and functional annotation of the Bacillus subtilis genes in the 200 kb rrnB-dnaB region.</title>
        <authorList>
            <person name="Lapidus A."/>
            <person name="Galleron N."/>
            <person name="Sorokin A."/>
            <person name="Ehrlich S.D."/>
        </authorList>
    </citation>
    <scope>NUCLEOTIDE SEQUENCE [GENOMIC DNA]</scope>
</reference>
<reference key="2">
    <citation type="journal article" date="1997" name="Nature">
        <title>The complete genome sequence of the Gram-positive bacterium Bacillus subtilis.</title>
        <authorList>
            <person name="Kunst F."/>
            <person name="Ogasawara N."/>
            <person name="Moszer I."/>
            <person name="Albertini A.M."/>
            <person name="Alloni G."/>
            <person name="Azevedo V."/>
            <person name="Bertero M.G."/>
            <person name="Bessieres P."/>
            <person name="Bolotin A."/>
            <person name="Borchert S."/>
            <person name="Borriss R."/>
            <person name="Boursier L."/>
            <person name="Brans A."/>
            <person name="Braun M."/>
            <person name="Brignell S.C."/>
            <person name="Bron S."/>
            <person name="Brouillet S."/>
            <person name="Bruschi C.V."/>
            <person name="Caldwell B."/>
            <person name="Capuano V."/>
            <person name="Carter N.M."/>
            <person name="Choi S.-K."/>
            <person name="Codani J.-J."/>
            <person name="Connerton I.F."/>
            <person name="Cummings N.J."/>
            <person name="Daniel R.A."/>
            <person name="Denizot F."/>
            <person name="Devine K.M."/>
            <person name="Duesterhoeft A."/>
            <person name="Ehrlich S.D."/>
            <person name="Emmerson P.T."/>
            <person name="Entian K.-D."/>
            <person name="Errington J."/>
            <person name="Fabret C."/>
            <person name="Ferrari E."/>
            <person name="Foulger D."/>
            <person name="Fritz C."/>
            <person name="Fujita M."/>
            <person name="Fujita Y."/>
            <person name="Fuma S."/>
            <person name="Galizzi A."/>
            <person name="Galleron N."/>
            <person name="Ghim S.-Y."/>
            <person name="Glaser P."/>
            <person name="Goffeau A."/>
            <person name="Golightly E.J."/>
            <person name="Grandi G."/>
            <person name="Guiseppi G."/>
            <person name="Guy B.J."/>
            <person name="Haga K."/>
            <person name="Haiech J."/>
            <person name="Harwood C.R."/>
            <person name="Henaut A."/>
            <person name="Hilbert H."/>
            <person name="Holsappel S."/>
            <person name="Hosono S."/>
            <person name="Hullo M.-F."/>
            <person name="Itaya M."/>
            <person name="Jones L.-M."/>
            <person name="Joris B."/>
            <person name="Karamata D."/>
            <person name="Kasahara Y."/>
            <person name="Klaerr-Blanchard M."/>
            <person name="Klein C."/>
            <person name="Kobayashi Y."/>
            <person name="Koetter P."/>
            <person name="Koningstein G."/>
            <person name="Krogh S."/>
            <person name="Kumano M."/>
            <person name="Kurita K."/>
            <person name="Lapidus A."/>
            <person name="Lardinois S."/>
            <person name="Lauber J."/>
            <person name="Lazarevic V."/>
            <person name="Lee S.-M."/>
            <person name="Levine A."/>
            <person name="Liu H."/>
            <person name="Masuda S."/>
            <person name="Mauel C."/>
            <person name="Medigue C."/>
            <person name="Medina N."/>
            <person name="Mellado R.P."/>
            <person name="Mizuno M."/>
            <person name="Moestl D."/>
            <person name="Nakai S."/>
            <person name="Noback M."/>
            <person name="Noone D."/>
            <person name="O'Reilly M."/>
            <person name="Ogawa K."/>
            <person name="Ogiwara A."/>
            <person name="Oudega B."/>
            <person name="Park S.-H."/>
            <person name="Parro V."/>
            <person name="Pohl T.M."/>
            <person name="Portetelle D."/>
            <person name="Porwollik S."/>
            <person name="Prescott A.M."/>
            <person name="Presecan E."/>
            <person name="Pujic P."/>
            <person name="Purnelle B."/>
            <person name="Rapoport G."/>
            <person name="Rey M."/>
            <person name="Reynolds S."/>
            <person name="Rieger M."/>
            <person name="Rivolta C."/>
            <person name="Rocha E."/>
            <person name="Roche B."/>
            <person name="Rose M."/>
            <person name="Sadaie Y."/>
            <person name="Sato T."/>
            <person name="Scanlan E."/>
            <person name="Schleich S."/>
            <person name="Schroeter R."/>
            <person name="Scoffone F."/>
            <person name="Sekiguchi J."/>
            <person name="Sekowska A."/>
            <person name="Seror S.J."/>
            <person name="Serror P."/>
            <person name="Shin B.-S."/>
            <person name="Soldo B."/>
            <person name="Sorokin A."/>
            <person name="Tacconi E."/>
            <person name="Takagi T."/>
            <person name="Takahashi H."/>
            <person name="Takemaru K."/>
            <person name="Takeuchi M."/>
            <person name="Tamakoshi A."/>
            <person name="Tanaka T."/>
            <person name="Terpstra P."/>
            <person name="Tognoni A."/>
            <person name="Tosato V."/>
            <person name="Uchiyama S."/>
            <person name="Vandenbol M."/>
            <person name="Vannier F."/>
            <person name="Vassarotti A."/>
            <person name="Viari A."/>
            <person name="Wambutt R."/>
            <person name="Wedler E."/>
            <person name="Wedler H."/>
            <person name="Weitzenegger T."/>
            <person name="Winters P."/>
            <person name="Wipat A."/>
            <person name="Yamamoto H."/>
            <person name="Yamane K."/>
            <person name="Yasumoto K."/>
            <person name="Yata K."/>
            <person name="Yoshida K."/>
            <person name="Yoshikawa H.-F."/>
            <person name="Zumstein E."/>
            <person name="Yoshikawa H."/>
            <person name="Danchin A."/>
        </authorList>
    </citation>
    <scope>NUCLEOTIDE SEQUENCE [LARGE SCALE GENOMIC DNA]</scope>
    <source>
        <strain>168</strain>
    </source>
</reference>
<reference key="3">
    <citation type="journal article" date="2009" name="Microbiology">
        <title>From a consortium sequence to a unified sequence: the Bacillus subtilis 168 reference genome a decade later.</title>
        <authorList>
            <person name="Barbe V."/>
            <person name="Cruveiller S."/>
            <person name="Kunst F."/>
            <person name="Lenoble P."/>
            <person name="Meurice G."/>
            <person name="Sekowska A."/>
            <person name="Vallenet D."/>
            <person name="Wang T."/>
            <person name="Moszer I."/>
            <person name="Medigue C."/>
            <person name="Danchin A."/>
        </authorList>
    </citation>
    <scope>SEQUENCE REVISION</scope>
</reference>
<reference key="4">
    <citation type="journal article" date="2006" name="Acta Crystallogr. F">
        <title>Overexpression, purification and preliminary X-ray analysis of pullulanase from Bacillus subtilis strain 168.</title>
        <authorList>
            <person name="Malle D."/>
            <person name="Itoh T."/>
            <person name="Hashimoto W."/>
            <person name="Murata K."/>
            <person name="Utsumi S."/>
            <person name="Mikami B."/>
        </authorList>
    </citation>
    <scope>PROTEIN SEQUENCE OF 1-10</scope>
    <scope>BIOPHYSICOCHEMICAL PROPERTIES</scope>
    <source>
        <strain>168</strain>
    </source>
</reference>
<accession>C0SPA0</accession>
<accession>O34587</accession>
<accession>Q795S6</accession>
<name>PULA_BACSU</name>
<sequence>MVSIRRSFEAYVDDMNIITVLIPAEQKEIMTPPFRLETEITDFPLAVREEYSLEAKYKYVCVSDHPVTFGKIHCVRASSGHKTDLQIGAVIRTAAFDDEFYYDGELGAVYTADHTVFKVWAPAATSAAVKLSHPNKSGRTFQMTRLEKGVYAVTVTGDLHGYEYLFCICNNSEWMETVDQYAKAVTVNGEKGVVLRPDQMKWTAPLKPFSHPVDAVIYETHLRDFSIHENSGMINKGKYLALTETDTQTANGSSSGLAYVKELGVTHVELLPVNDFAGVDEEKPLDAYNWGYNPLHFFAPEGSYASNPHDPQTRKTELKQMINTLHQHGLRVILDVVFNHVYKRENSPFEKTVPGYFFRHDECGMPSNGTGVGNDIASERRMARKFIADCVVYWLEEYNVDGFRFDLLGILDIDTVLYMKEKATKAKPGILLFGEGWDLATPLPHEQKAALANAPRMPGIGFFNDMFRDAVKGNTFHLKATGFALGNGESAQAVMHGIAGSSGWKALAPIVPEPSQSINYVESHDNHTFWDKMSFALPQENDSRKRSRQRLAAAIILLAQGVPFIHSGQEFFRTKQGVENSYQSSDSINQLDWDRRETFKEDVHYIRRLISLRKAHPAFRLRSAADIQRHLECLTLKEHLIAYRLYDLDEVDEWKDIIVIHHASPDSVEWRLPNDIPYRLLCDPSGFQEDPTEIKKTVAVNGIGTVILYLASDLKSFA</sequence>
<proteinExistence type="evidence at protein level"/>